<reference key="1">
    <citation type="submission" date="2005-03" db="EMBL/GenBank/DDBJ databases">
        <title>Brevibacillus brevis strain 47, complete genome.</title>
        <authorList>
            <person name="Hosoyama A."/>
            <person name="Yamada R."/>
            <person name="Hongo Y."/>
            <person name="Terui Y."/>
            <person name="Ankai A."/>
            <person name="Masuyama W."/>
            <person name="Sekiguchi M."/>
            <person name="Takeda T."/>
            <person name="Asano K."/>
            <person name="Ohji S."/>
            <person name="Ichikawa N."/>
            <person name="Narita S."/>
            <person name="Aoki N."/>
            <person name="Miura H."/>
            <person name="Matsushita S."/>
            <person name="Sekigawa T."/>
            <person name="Yamagata H."/>
            <person name="Yoshikawa H."/>
            <person name="Udaka S."/>
            <person name="Tanikawa S."/>
            <person name="Fujita N."/>
        </authorList>
    </citation>
    <scope>NUCLEOTIDE SEQUENCE [LARGE SCALE GENOMIC DNA]</scope>
    <source>
        <strain>47 / JCM 6285 / NBRC 100599</strain>
    </source>
</reference>
<dbReference type="EC" id="3.4.11.4" evidence="1"/>
<dbReference type="EMBL" id="AP008955">
    <property type="protein sequence ID" value="BAH43842.1"/>
    <property type="molecule type" value="Genomic_DNA"/>
</dbReference>
<dbReference type="RefSeq" id="WP_015891162.1">
    <property type="nucleotide sequence ID" value="NC_012491.1"/>
</dbReference>
<dbReference type="SMR" id="C0ZDI3"/>
<dbReference type="STRING" id="358681.BBR47_28650"/>
<dbReference type="MEROPS" id="M20.003"/>
<dbReference type="KEGG" id="bbe:BBR47_28650"/>
<dbReference type="eggNOG" id="COG2195">
    <property type="taxonomic scope" value="Bacteria"/>
</dbReference>
<dbReference type="HOGENOM" id="CLU_053676_0_0_9"/>
<dbReference type="Proteomes" id="UP000001877">
    <property type="component" value="Chromosome"/>
</dbReference>
<dbReference type="GO" id="GO:0005829">
    <property type="term" value="C:cytosol"/>
    <property type="evidence" value="ECO:0007669"/>
    <property type="project" value="TreeGrafter"/>
</dbReference>
<dbReference type="GO" id="GO:0008237">
    <property type="term" value="F:metallopeptidase activity"/>
    <property type="evidence" value="ECO:0007669"/>
    <property type="project" value="UniProtKB-KW"/>
</dbReference>
<dbReference type="GO" id="GO:0045148">
    <property type="term" value="F:tripeptide aminopeptidase activity"/>
    <property type="evidence" value="ECO:0007669"/>
    <property type="project" value="UniProtKB-UniRule"/>
</dbReference>
<dbReference type="GO" id="GO:0008270">
    <property type="term" value="F:zinc ion binding"/>
    <property type="evidence" value="ECO:0007669"/>
    <property type="project" value="UniProtKB-UniRule"/>
</dbReference>
<dbReference type="GO" id="GO:0043171">
    <property type="term" value="P:peptide catabolic process"/>
    <property type="evidence" value="ECO:0007669"/>
    <property type="project" value="UniProtKB-UniRule"/>
</dbReference>
<dbReference type="GO" id="GO:0006508">
    <property type="term" value="P:proteolysis"/>
    <property type="evidence" value="ECO:0007669"/>
    <property type="project" value="UniProtKB-UniRule"/>
</dbReference>
<dbReference type="CDD" id="cd03892">
    <property type="entry name" value="M20_peptT"/>
    <property type="match status" value="1"/>
</dbReference>
<dbReference type="FunFam" id="3.30.70.360:FF:000002">
    <property type="entry name" value="Peptidase T"/>
    <property type="match status" value="1"/>
</dbReference>
<dbReference type="Gene3D" id="3.30.70.360">
    <property type="match status" value="1"/>
</dbReference>
<dbReference type="Gene3D" id="3.40.630.10">
    <property type="entry name" value="Zn peptidases"/>
    <property type="match status" value="1"/>
</dbReference>
<dbReference type="HAMAP" id="MF_00550">
    <property type="entry name" value="Aminopeptidase_M20"/>
    <property type="match status" value="1"/>
</dbReference>
<dbReference type="InterPro" id="IPR001261">
    <property type="entry name" value="ArgE/DapE_CS"/>
</dbReference>
<dbReference type="InterPro" id="IPR036264">
    <property type="entry name" value="Bact_exopeptidase_dim_dom"/>
</dbReference>
<dbReference type="InterPro" id="IPR002933">
    <property type="entry name" value="Peptidase_M20"/>
</dbReference>
<dbReference type="InterPro" id="IPR011650">
    <property type="entry name" value="Peptidase_M20_dimer"/>
</dbReference>
<dbReference type="InterPro" id="IPR010161">
    <property type="entry name" value="Peptidase_M20B"/>
</dbReference>
<dbReference type="NCBIfam" id="TIGR01882">
    <property type="entry name" value="peptidase-T"/>
    <property type="match status" value="1"/>
</dbReference>
<dbReference type="NCBIfam" id="NF003976">
    <property type="entry name" value="PRK05469.1"/>
    <property type="match status" value="1"/>
</dbReference>
<dbReference type="NCBIfam" id="NF009920">
    <property type="entry name" value="PRK13381.1"/>
    <property type="match status" value="1"/>
</dbReference>
<dbReference type="PANTHER" id="PTHR42994">
    <property type="entry name" value="PEPTIDASE T"/>
    <property type="match status" value="1"/>
</dbReference>
<dbReference type="PANTHER" id="PTHR42994:SF1">
    <property type="entry name" value="PEPTIDASE T"/>
    <property type="match status" value="1"/>
</dbReference>
<dbReference type="Pfam" id="PF07687">
    <property type="entry name" value="M20_dimer"/>
    <property type="match status" value="1"/>
</dbReference>
<dbReference type="Pfam" id="PF01546">
    <property type="entry name" value="Peptidase_M20"/>
    <property type="match status" value="1"/>
</dbReference>
<dbReference type="PIRSF" id="PIRSF037215">
    <property type="entry name" value="Peptidase_M20B"/>
    <property type="match status" value="1"/>
</dbReference>
<dbReference type="SUPFAM" id="SSF55031">
    <property type="entry name" value="Bacterial exopeptidase dimerisation domain"/>
    <property type="match status" value="1"/>
</dbReference>
<dbReference type="SUPFAM" id="SSF53187">
    <property type="entry name" value="Zn-dependent exopeptidases"/>
    <property type="match status" value="1"/>
</dbReference>
<dbReference type="PROSITE" id="PS00758">
    <property type="entry name" value="ARGE_DAPE_CPG2_1"/>
    <property type="match status" value="1"/>
</dbReference>
<dbReference type="PROSITE" id="PS00759">
    <property type="entry name" value="ARGE_DAPE_CPG2_2"/>
    <property type="match status" value="1"/>
</dbReference>
<name>PEPT_BREBN</name>
<organism>
    <name type="scientific">Brevibacillus brevis (strain 47 / JCM 6285 / NBRC 100599)</name>
    <dbReference type="NCBI Taxonomy" id="358681"/>
    <lineage>
        <taxon>Bacteria</taxon>
        <taxon>Bacillati</taxon>
        <taxon>Bacillota</taxon>
        <taxon>Bacilli</taxon>
        <taxon>Bacillales</taxon>
        <taxon>Paenibacillaceae</taxon>
        <taxon>Brevibacillus</taxon>
    </lineage>
</organism>
<sequence>MKTEIINRFISYAQVDTQSDENSETCPSTPGQLVLAQMLVGELKAIGMQEVTMDSNGYVMATLPSNTDKEIPTIGFLAHMDTATDFTGADVKPQVIENYNGQDIVLNEALNIVLSPQEFPELAGYKGHTIITTDGTTLLGADDKAGIAEIMTAMDYLIRHPELKHGKVRVAFTPDEEIGRGPDKFDVSAFDAVYAYTMDGGPLGGIEYESFHAASATITCKGTNVHPGSAKGKMVNAAKIAMELHGKLPANETTEETEGYEGFYHLSSIQGDVEQTQLRYLIRDHDRNRFQERKSELARIVEELQKTYGEKRIELEIKDEYFNMREKIEPVMEVVDIATQALENLGIVPNIQPIRGGTDGSQLSYMGLPTPNIFTGGENYHGRFEYVSVDNMMHAVNTIIEIVKLYEQRA</sequence>
<protein>
    <recommendedName>
        <fullName evidence="1">Peptidase T</fullName>
        <ecNumber evidence="1">3.4.11.4</ecNumber>
    </recommendedName>
    <alternativeName>
        <fullName evidence="1">Aminotripeptidase</fullName>
        <shortName evidence="1">Tripeptidase</shortName>
    </alternativeName>
    <alternativeName>
        <fullName evidence="1">Tripeptide aminopeptidase</fullName>
    </alternativeName>
</protein>
<feature type="chain" id="PRO_1000200884" description="Peptidase T">
    <location>
        <begin position="1"/>
        <end position="410"/>
    </location>
</feature>
<feature type="active site" evidence="1">
    <location>
        <position position="81"/>
    </location>
</feature>
<feature type="active site" description="Proton acceptor" evidence="1">
    <location>
        <position position="176"/>
    </location>
</feature>
<feature type="binding site" evidence="1">
    <location>
        <position position="79"/>
    </location>
    <ligand>
        <name>Zn(2+)</name>
        <dbReference type="ChEBI" id="CHEBI:29105"/>
        <label>1</label>
    </ligand>
</feature>
<feature type="binding site" evidence="1">
    <location>
        <position position="142"/>
    </location>
    <ligand>
        <name>Zn(2+)</name>
        <dbReference type="ChEBI" id="CHEBI:29105"/>
        <label>1</label>
    </ligand>
</feature>
<feature type="binding site" evidence="1">
    <location>
        <position position="142"/>
    </location>
    <ligand>
        <name>Zn(2+)</name>
        <dbReference type="ChEBI" id="CHEBI:29105"/>
        <label>2</label>
    </ligand>
</feature>
<feature type="binding site" evidence="1">
    <location>
        <position position="177"/>
    </location>
    <ligand>
        <name>Zn(2+)</name>
        <dbReference type="ChEBI" id="CHEBI:29105"/>
        <label>2</label>
    </ligand>
</feature>
<feature type="binding site" evidence="1">
    <location>
        <position position="199"/>
    </location>
    <ligand>
        <name>Zn(2+)</name>
        <dbReference type="ChEBI" id="CHEBI:29105"/>
        <label>1</label>
    </ligand>
</feature>
<feature type="binding site" evidence="1">
    <location>
        <position position="381"/>
    </location>
    <ligand>
        <name>Zn(2+)</name>
        <dbReference type="ChEBI" id="CHEBI:29105"/>
        <label>2</label>
    </ligand>
</feature>
<comment type="function">
    <text evidence="1">Cleaves the N-terminal amino acid of tripeptides.</text>
</comment>
<comment type="catalytic activity">
    <reaction evidence="1">
        <text>Release of the N-terminal residue from a tripeptide.</text>
        <dbReference type="EC" id="3.4.11.4"/>
    </reaction>
</comment>
<comment type="cofactor">
    <cofactor evidence="1">
        <name>Zn(2+)</name>
        <dbReference type="ChEBI" id="CHEBI:29105"/>
    </cofactor>
    <text evidence="1">Binds 2 Zn(2+) ions per subunit.</text>
</comment>
<comment type="subcellular location">
    <subcellularLocation>
        <location evidence="1">Cytoplasm</location>
    </subcellularLocation>
</comment>
<comment type="similarity">
    <text evidence="1">Belongs to the peptidase M20B family.</text>
</comment>
<proteinExistence type="inferred from homology"/>
<evidence type="ECO:0000255" key="1">
    <source>
        <dbReference type="HAMAP-Rule" id="MF_00550"/>
    </source>
</evidence>
<gene>
    <name evidence="1" type="primary">pepT</name>
    <name type="ordered locus">BBR47_28650</name>
</gene>
<keyword id="KW-0031">Aminopeptidase</keyword>
<keyword id="KW-0963">Cytoplasm</keyword>
<keyword id="KW-0378">Hydrolase</keyword>
<keyword id="KW-0479">Metal-binding</keyword>
<keyword id="KW-0482">Metalloprotease</keyword>
<keyword id="KW-0645">Protease</keyword>
<keyword id="KW-1185">Reference proteome</keyword>
<keyword id="KW-0862">Zinc</keyword>
<accession>C0ZDI3</accession>